<protein>
    <recommendedName>
        <fullName evidence="2">Translation initiation factor IF-2</fullName>
    </recommendedName>
</protein>
<accession>Q3AZB7</accession>
<sequence>MTSSGKVRIYELSKDLGLENKDVLDAAEKLSIAAKSHSSSISDSEAGKIRSLLGKGASPSQPTAPAAKPAPAKPAAGKSILSVKKAPASPGVTAPVAAAKPQAPAQPAASKPLQPSVKAVAPPARPAPAGSTSAGSTPNKPATAPARPTAATTTSTPRPAAAAAPSRPAPSKPQGAPKPQVVGKPSAPELVSKPTPATKPTGAAKPAIVSKPITAAKPAVVAKPAAAKPTIVKPTAPTPRPASSPAAASSAPPPASTPRPAPSRPTPRPAAAPSRPGAPQGQKPQIVSRAGAPPRPGTPPRVGAPTKTGTPARPTPRPELVGKPVPRRTGGVGAPQRPGTGVPQRQGGPARPGAPTRTGKPGAPTRPGGNTLELVGKPIRRDGSSASGRPGAPTRPGAPTRPGMPGGMRKPVAPGELMQLQKPISRPAAPAPRRPDAPNRPTEAAGTATPPVARPTAPSAPRRPGFRPGAPGGQRRPGRPDWDDSAKLEALRSRSPQKQRQKVHIIGENDDALAAQTGGFAGEQQAMVLSASLARPAKPKAQQRTAPKPVAAVRKRRKETARQRQRRRAMELRAAREAKQVRPEMIVVPEDNLTVQELADMLSIESSEIIKSLFFKGVIATVTQTLDMPTIEAVAKEFDVPVLQDDVEEAAKKTVEMIEEADLKHLIRRPPVVTVMGHVDHGKTSLLDAIRQARVAAGEAGGITQHIGAYQVEIQHKDEARKLTFLDTPGHAAFTAMRARGTKVTDVAVLVVAADDGVRPQTLEAISHARAAEVPIVVAINKIDKEGASADRVKQELSEQNLLAEEWGGDVVMVPVSAIKGENIDKLLEMLLLVTEVEDLQANPDRPARGTVIEAHLDKAKGPVATLLIQNGTLKTGDVLAAGPVLGKVRAMVDDNRQRLKEAGPSFAVEALGFSEVPTAGDEFEVYPDEKAARAVVGDRASNARATRLAQQMASRRVSLTAMSGQANEGELKELNLILKADVQGSVEAILGSLEQLPKDEVQVRVLLSAPGEITETDVDLAAASGAVIIGFNTSMASGAKKAADATGVDVRDYDVIYKLLEDIQLAMEGLLEPELIEEALGEAEVRAVFTIGKSAVAGCYVNTGKLHRNCRVRVHRGKQVVYTGDLDSLRRNKDDVKEVATGFECGVGADRFANWEEGDRIEAFKMVTQRRKLTT</sequence>
<reference key="1">
    <citation type="submission" date="2005-08" db="EMBL/GenBank/DDBJ databases">
        <title>Complete sequence of Synechococcus sp. CC9902.</title>
        <authorList>
            <person name="Copeland A."/>
            <person name="Lucas S."/>
            <person name="Lapidus A."/>
            <person name="Barry K."/>
            <person name="Detter J.C."/>
            <person name="Glavina T."/>
            <person name="Hammon N."/>
            <person name="Israni S."/>
            <person name="Pitluck S."/>
            <person name="Martinez M."/>
            <person name="Schmutz J."/>
            <person name="Larimer F."/>
            <person name="Land M."/>
            <person name="Kyrpides N."/>
            <person name="Ivanova N."/>
            <person name="Richardson P."/>
        </authorList>
    </citation>
    <scope>NUCLEOTIDE SEQUENCE [LARGE SCALE GENOMIC DNA]</scope>
    <source>
        <strain>CC9902</strain>
    </source>
</reference>
<proteinExistence type="inferred from homology"/>
<dbReference type="EMBL" id="CP000097">
    <property type="protein sequence ID" value="ABB25560.1"/>
    <property type="molecule type" value="Genomic_DNA"/>
</dbReference>
<dbReference type="RefSeq" id="WP_011359405.1">
    <property type="nucleotide sequence ID" value="NC_007513.1"/>
</dbReference>
<dbReference type="SMR" id="Q3AZB7"/>
<dbReference type="STRING" id="316279.Syncc9902_0592"/>
<dbReference type="KEGG" id="sye:Syncc9902_0592"/>
<dbReference type="eggNOG" id="COG0532">
    <property type="taxonomic scope" value="Bacteria"/>
</dbReference>
<dbReference type="HOGENOM" id="CLU_006301_5_1_3"/>
<dbReference type="OrthoDB" id="9811804at2"/>
<dbReference type="Proteomes" id="UP000002712">
    <property type="component" value="Chromosome"/>
</dbReference>
<dbReference type="GO" id="GO:0005829">
    <property type="term" value="C:cytosol"/>
    <property type="evidence" value="ECO:0007669"/>
    <property type="project" value="TreeGrafter"/>
</dbReference>
<dbReference type="GO" id="GO:0005525">
    <property type="term" value="F:GTP binding"/>
    <property type="evidence" value="ECO:0007669"/>
    <property type="project" value="UniProtKB-KW"/>
</dbReference>
<dbReference type="GO" id="GO:0003924">
    <property type="term" value="F:GTPase activity"/>
    <property type="evidence" value="ECO:0007669"/>
    <property type="project" value="UniProtKB-UniRule"/>
</dbReference>
<dbReference type="GO" id="GO:0003743">
    <property type="term" value="F:translation initiation factor activity"/>
    <property type="evidence" value="ECO:0007669"/>
    <property type="project" value="UniProtKB-UniRule"/>
</dbReference>
<dbReference type="CDD" id="cd01887">
    <property type="entry name" value="IF2_eIF5B"/>
    <property type="match status" value="1"/>
</dbReference>
<dbReference type="CDD" id="cd03702">
    <property type="entry name" value="IF2_mtIF2_II"/>
    <property type="match status" value="1"/>
</dbReference>
<dbReference type="CDD" id="cd03692">
    <property type="entry name" value="mtIF2_IVc"/>
    <property type="match status" value="1"/>
</dbReference>
<dbReference type="FunFam" id="2.40.30.10:FF:000007">
    <property type="entry name" value="Translation initiation factor IF-2"/>
    <property type="match status" value="1"/>
</dbReference>
<dbReference type="FunFam" id="2.40.30.10:FF:000008">
    <property type="entry name" value="Translation initiation factor IF-2"/>
    <property type="match status" value="1"/>
</dbReference>
<dbReference type="FunFam" id="3.40.50.10050:FF:000001">
    <property type="entry name" value="Translation initiation factor IF-2"/>
    <property type="match status" value="1"/>
</dbReference>
<dbReference type="FunFam" id="3.40.50.300:FF:000019">
    <property type="entry name" value="Translation initiation factor IF-2"/>
    <property type="match status" value="1"/>
</dbReference>
<dbReference type="Gene3D" id="1.10.10.2480">
    <property type="match status" value="1"/>
</dbReference>
<dbReference type="Gene3D" id="3.40.50.300">
    <property type="entry name" value="P-loop containing nucleotide triphosphate hydrolases"/>
    <property type="match status" value="1"/>
</dbReference>
<dbReference type="Gene3D" id="2.40.30.10">
    <property type="entry name" value="Translation factors"/>
    <property type="match status" value="2"/>
</dbReference>
<dbReference type="Gene3D" id="3.40.50.10050">
    <property type="entry name" value="Translation initiation factor IF- 2, domain 3"/>
    <property type="match status" value="1"/>
</dbReference>
<dbReference type="HAMAP" id="MF_00100_B">
    <property type="entry name" value="IF_2_B"/>
    <property type="match status" value="1"/>
</dbReference>
<dbReference type="InterPro" id="IPR053905">
    <property type="entry name" value="EF-G-like_DII"/>
</dbReference>
<dbReference type="InterPro" id="IPR044145">
    <property type="entry name" value="IF2_II"/>
</dbReference>
<dbReference type="InterPro" id="IPR006847">
    <property type="entry name" value="IF2_N"/>
</dbReference>
<dbReference type="InterPro" id="IPR027417">
    <property type="entry name" value="P-loop_NTPase"/>
</dbReference>
<dbReference type="InterPro" id="IPR005225">
    <property type="entry name" value="Small_GTP-bd"/>
</dbReference>
<dbReference type="InterPro" id="IPR000795">
    <property type="entry name" value="T_Tr_GTP-bd_dom"/>
</dbReference>
<dbReference type="InterPro" id="IPR000178">
    <property type="entry name" value="TF_IF2_bacterial-like"/>
</dbReference>
<dbReference type="InterPro" id="IPR015760">
    <property type="entry name" value="TIF_IF2"/>
</dbReference>
<dbReference type="InterPro" id="IPR023115">
    <property type="entry name" value="TIF_IF2_dom3"/>
</dbReference>
<dbReference type="InterPro" id="IPR036925">
    <property type="entry name" value="TIF_IF2_dom3_sf"/>
</dbReference>
<dbReference type="InterPro" id="IPR009000">
    <property type="entry name" value="Transl_B-barrel_sf"/>
</dbReference>
<dbReference type="NCBIfam" id="TIGR00487">
    <property type="entry name" value="IF-2"/>
    <property type="match status" value="1"/>
</dbReference>
<dbReference type="NCBIfam" id="TIGR00231">
    <property type="entry name" value="small_GTP"/>
    <property type="match status" value="1"/>
</dbReference>
<dbReference type="PANTHER" id="PTHR43381:SF5">
    <property type="entry name" value="TR-TYPE G DOMAIN-CONTAINING PROTEIN"/>
    <property type="match status" value="1"/>
</dbReference>
<dbReference type="PANTHER" id="PTHR43381">
    <property type="entry name" value="TRANSLATION INITIATION FACTOR IF-2-RELATED"/>
    <property type="match status" value="1"/>
</dbReference>
<dbReference type="Pfam" id="PF22042">
    <property type="entry name" value="EF-G_D2"/>
    <property type="match status" value="1"/>
</dbReference>
<dbReference type="Pfam" id="PF00009">
    <property type="entry name" value="GTP_EFTU"/>
    <property type="match status" value="1"/>
</dbReference>
<dbReference type="Pfam" id="PF11987">
    <property type="entry name" value="IF-2"/>
    <property type="match status" value="1"/>
</dbReference>
<dbReference type="Pfam" id="PF04760">
    <property type="entry name" value="IF2_N"/>
    <property type="match status" value="2"/>
</dbReference>
<dbReference type="PRINTS" id="PR01217">
    <property type="entry name" value="PRICHEXTENSN"/>
</dbReference>
<dbReference type="SUPFAM" id="SSF52156">
    <property type="entry name" value="Initiation factor IF2/eIF5b, domain 3"/>
    <property type="match status" value="1"/>
</dbReference>
<dbReference type="SUPFAM" id="SSF52540">
    <property type="entry name" value="P-loop containing nucleoside triphosphate hydrolases"/>
    <property type="match status" value="1"/>
</dbReference>
<dbReference type="SUPFAM" id="SSF50447">
    <property type="entry name" value="Translation proteins"/>
    <property type="match status" value="2"/>
</dbReference>
<dbReference type="PROSITE" id="PS51722">
    <property type="entry name" value="G_TR_2"/>
    <property type="match status" value="1"/>
</dbReference>
<dbReference type="PROSITE" id="PS01176">
    <property type="entry name" value="IF2"/>
    <property type="match status" value="1"/>
</dbReference>
<keyword id="KW-0963">Cytoplasm</keyword>
<keyword id="KW-0342">GTP-binding</keyword>
<keyword id="KW-0396">Initiation factor</keyword>
<keyword id="KW-0547">Nucleotide-binding</keyword>
<keyword id="KW-0648">Protein biosynthesis</keyword>
<keyword id="KW-1185">Reference proteome</keyword>
<name>IF2_SYNS9</name>
<comment type="function">
    <text evidence="2">One of the essential components for the initiation of protein synthesis. Protects formylmethionyl-tRNA from spontaneous hydrolysis and promotes its binding to the 30S ribosomal subunits. Also involved in the hydrolysis of GTP during the formation of the 70S ribosomal complex.</text>
</comment>
<comment type="subcellular location">
    <subcellularLocation>
        <location evidence="2">Cytoplasm</location>
    </subcellularLocation>
</comment>
<comment type="similarity">
    <text evidence="2">Belongs to the TRAFAC class translation factor GTPase superfamily. Classic translation factor GTPase family. IF-2 subfamily.</text>
</comment>
<organism>
    <name type="scientific">Synechococcus sp. (strain CC9902)</name>
    <dbReference type="NCBI Taxonomy" id="316279"/>
    <lineage>
        <taxon>Bacteria</taxon>
        <taxon>Bacillati</taxon>
        <taxon>Cyanobacteriota</taxon>
        <taxon>Cyanophyceae</taxon>
        <taxon>Synechococcales</taxon>
        <taxon>Synechococcaceae</taxon>
        <taxon>Synechococcus</taxon>
    </lineage>
</organism>
<feature type="chain" id="PRO_1000008364" description="Translation initiation factor IF-2">
    <location>
        <begin position="1"/>
        <end position="1176"/>
    </location>
</feature>
<feature type="domain" description="tr-type G">
    <location>
        <begin position="668"/>
        <end position="840"/>
    </location>
</feature>
<feature type="region of interest" description="Disordered" evidence="3">
    <location>
        <begin position="32"/>
        <end position="502"/>
    </location>
</feature>
<feature type="region of interest" description="Disordered" evidence="3">
    <location>
        <begin position="535"/>
        <end position="567"/>
    </location>
</feature>
<feature type="region of interest" description="G1" evidence="1">
    <location>
        <begin position="677"/>
        <end position="684"/>
    </location>
</feature>
<feature type="region of interest" description="G2" evidence="1">
    <location>
        <begin position="702"/>
        <end position="706"/>
    </location>
</feature>
<feature type="region of interest" description="G3" evidence="1">
    <location>
        <begin position="727"/>
        <end position="730"/>
    </location>
</feature>
<feature type="region of interest" description="G4" evidence="1">
    <location>
        <begin position="781"/>
        <end position="784"/>
    </location>
</feature>
<feature type="region of interest" description="G5" evidence="1">
    <location>
        <begin position="817"/>
        <end position="819"/>
    </location>
</feature>
<feature type="compositionally biased region" description="Low complexity" evidence="3">
    <location>
        <begin position="32"/>
        <end position="44"/>
    </location>
</feature>
<feature type="compositionally biased region" description="Low complexity" evidence="3">
    <location>
        <begin position="57"/>
        <end position="79"/>
    </location>
</feature>
<feature type="compositionally biased region" description="Low complexity" evidence="3">
    <location>
        <begin position="94"/>
        <end position="166"/>
    </location>
</feature>
<feature type="compositionally biased region" description="Low complexity" evidence="3">
    <location>
        <begin position="193"/>
        <end position="235"/>
    </location>
</feature>
<feature type="compositionally biased region" description="Pro residues" evidence="3">
    <location>
        <begin position="251"/>
        <end position="270"/>
    </location>
</feature>
<feature type="compositionally biased region" description="Low complexity" evidence="3">
    <location>
        <begin position="388"/>
        <end position="409"/>
    </location>
</feature>
<feature type="compositionally biased region" description="Low complexity" evidence="3">
    <location>
        <begin position="439"/>
        <end position="469"/>
    </location>
</feature>
<feature type="compositionally biased region" description="Basic and acidic residues" evidence="3">
    <location>
        <begin position="478"/>
        <end position="492"/>
    </location>
</feature>
<feature type="compositionally biased region" description="Basic residues" evidence="3">
    <location>
        <begin position="553"/>
        <end position="567"/>
    </location>
</feature>
<feature type="binding site" evidence="2">
    <location>
        <begin position="677"/>
        <end position="684"/>
    </location>
    <ligand>
        <name>GTP</name>
        <dbReference type="ChEBI" id="CHEBI:37565"/>
    </ligand>
</feature>
<feature type="binding site" evidence="2">
    <location>
        <begin position="727"/>
        <end position="731"/>
    </location>
    <ligand>
        <name>GTP</name>
        <dbReference type="ChEBI" id="CHEBI:37565"/>
    </ligand>
</feature>
<feature type="binding site" evidence="2">
    <location>
        <begin position="781"/>
        <end position="784"/>
    </location>
    <ligand>
        <name>GTP</name>
        <dbReference type="ChEBI" id="CHEBI:37565"/>
    </ligand>
</feature>
<evidence type="ECO:0000250" key="1"/>
<evidence type="ECO:0000255" key="2">
    <source>
        <dbReference type="HAMAP-Rule" id="MF_00100"/>
    </source>
</evidence>
<evidence type="ECO:0000256" key="3">
    <source>
        <dbReference type="SAM" id="MobiDB-lite"/>
    </source>
</evidence>
<gene>
    <name evidence="2" type="primary">infB</name>
    <name type="ordered locus">Syncc9902_0592</name>
</gene>